<name>CATA_STAAC</name>
<keyword id="KW-0349">Heme</keyword>
<keyword id="KW-0376">Hydrogen peroxide</keyword>
<keyword id="KW-0408">Iron</keyword>
<keyword id="KW-0479">Metal-binding</keyword>
<keyword id="KW-0560">Oxidoreductase</keyword>
<keyword id="KW-0575">Peroxidase</keyword>
<organism>
    <name type="scientific">Staphylococcus aureus (strain COL)</name>
    <dbReference type="NCBI Taxonomy" id="93062"/>
    <lineage>
        <taxon>Bacteria</taxon>
        <taxon>Bacillati</taxon>
        <taxon>Bacillota</taxon>
        <taxon>Bacilli</taxon>
        <taxon>Bacillales</taxon>
        <taxon>Staphylococcaceae</taxon>
        <taxon>Staphylococcus</taxon>
    </lineage>
</organism>
<gene>
    <name type="primary">katA</name>
    <name type="ordered locus">SACOL1368</name>
</gene>
<sequence length="505" mass="58380">MSQQDKKLTGVFGHPVSDRENSMTAGPRGPLLMQDIYFLEQMSQFDREVIPERRMHAKGSGAFGTFTVTKDITKYTNAKIFSEIGKQTEMFARFSTVAGERGAADAERDIRGFALKFYTEEGNWDLVGNNTPVFFFRDPKLFVSLNRAVKRDPRTNMRDAQNNWDFWTGLPEALHQVTILMSDRGIPKDLRHMHGFGSHTYSMYNDSGERVWVKFHFRTQQGIENLTDEEAAEIIATDRDSSQRDLFEAIEKGDYPKWTMYIQVMTEEQAKNHKDNPFDLTKVWYHDEYPLIEVGEFELNRNPDNYFMDVEQAAFAPTNIIPGLDFSPDKMLQGRLFSYGDAQRYRLGVNHWQIPVNQPKGVGIENICPFSRDGQMRVVDNNQGGGTHYYPNNHGKFDSQPEYKKPPFPTDGYGYEYNQRQDDDNYFEQPGKLFRLQSEDAKERIFTNTANAMEGVTDDVKRRHIRHCYKADPEYGKGVAKALGIDINSIDLETENDETYENFEK</sequence>
<evidence type="ECO:0000250" key="1"/>
<evidence type="ECO:0000255" key="2">
    <source>
        <dbReference type="PROSITE-ProRule" id="PRU10013"/>
    </source>
</evidence>
<evidence type="ECO:0000256" key="3">
    <source>
        <dbReference type="SAM" id="MobiDB-lite"/>
    </source>
</evidence>
<evidence type="ECO:0000305" key="4"/>
<dbReference type="EC" id="1.11.1.6"/>
<dbReference type="EMBL" id="CP000046">
    <property type="protein sequence ID" value="AAW36617.1"/>
    <property type="status" value="ALT_INIT"/>
    <property type="molecule type" value="Genomic_DNA"/>
</dbReference>
<dbReference type="RefSeq" id="WP_000082539.1">
    <property type="nucleotide sequence ID" value="NZ_JBGOFO010000002.1"/>
</dbReference>
<dbReference type="SMR" id="Q5HG86"/>
<dbReference type="KEGG" id="sac:SACOL1368"/>
<dbReference type="HOGENOM" id="CLU_010645_2_0_9"/>
<dbReference type="Proteomes" id="UP000000530">
    <property type="component" value="Chromosome"/>
</dbReference>
<dbReference type="GO" id="GO:0005737">
    <property type="term" value="C:cytoplasm"/>
    <property type="evidence" value="ECO:0007669"/>
    <property type="project" value="TreeGrafter"/>
</dbReference>
<dbReference type="GO" id="GO:0004096">
    <property type="term" value="F:catalase activity"/>
    <property type="evidence" value="ECO:0007669"/>
    <property type="project" value="UniProtKB-EC"/>
</dbReference>
<dbReference type="GO" id="GO:0020037">
    <property type="term" value="F:heme binding"/>
    <property type="evidence" value="ECO:0007669"/>
    <property type="project" value="InterPro"/>
</dbReference>
<dbReference type="GO" id="GO:0046872">
    <property type="term" value="F:metal ion binding"/>
    <property type="evidence" value="ECO:0007669"/>
    <property type="project" value="UniProtKB-KW"/>
</dbReference>
<dbReference type="GO" id="GO:0042744">
    <property type="term" value="P:hydrogen peroxide catabolic process"/>
    <property type="evidence" value="ECO:0007669"/>
    <property type="project" value="UniProtKB-KW"/>
</dbReference>
<dbReference type="GO" id="GO:0042542">
    <property type="term" value="P:response to hydrogen peroxide"/>
    <property type="evidence" value="ECO:0007669"/>
    <property type="project" value="TreeGrafter"/>
</dbReference>
<dbReference type="CDD" id="cd08156">
    <property type="entry name" value="catalase_clade_3"/>
    <property type="match status" value="1"/>
</dbReference>
<dbReference type="FunFam" id="2.40.180.10:FF:000001">
    <property type="entry name" value="Catalase"/>
    <property type="match status" value="1"/>
</dbReference>
<dbReference type="Gene3D" id="2.40.180.10">
    <property type="entry name" value="Catalase core domain"/>
    <property type="match status" value="1"/>
</dbReference>
<dbReference type="InterPro" id="IPR018028">
    <property type="entry name" value="Catalase"/>
</dbReference>
<dbReference type="InterPro" id="IPR040333">
    <property type="entry name" value="Catalase_3"/>
</dbReference>
<dbReference type="InterPro" id="IPR024708">
    <property type="entry name" value="Catalase_AS"/>
</dbReference>
<dbReference type="InterPro" id="IPR024711">
    <property type="entry name" value="Catalase_clade1/3"/>
</dbReference>
<dbReference type="InterPro" id="IPR011614">
    <property type="entry name" value="Catalase_core"/>
</dbReference>
<dbReference type="InterPro" id="IPR002226">
    <property type="entry name" value="Catalase_haem_BS"/>
</dbReference>
<dbReference type="InterPro" id="IPR010582">
    <property type="entry name" value="Catalase_immune_responsive"/>
</dbReference>
<dbReference type="InterPro" id="IPR020835">
    <property type="entry name" value="Catalase_sf"/>
</dbReference>
<dbReference type="PANTHER" id="PTHR11465">
    <property type="entry name" value="CATALASE"/>
    <property type="match status" value="1"/>
</dbReference>
<dbReference type="PANTHER" id="PTHR11465:SF61">
    <property type="entry name" value="CATALASE"/>
    <property type="match status" value="1"/>
</dbReference>
<dbReference type="Pfam" id="PF00199">
    <property type="entry name" value="Catalase"/>
    <property type="match status" value="1"/>
</dbReference>
<dbReference type="Pfam" id="PF06628">
    <property type="entry name" value="Catalase-rel"/>
    <property type="match status" value="1"/>
</dbReference>
<dbReference type="PIRSF" id="PIRSF038928">
    <property type="entry name" value="Catalase_clade1-3"/>
    <property type="match status" value="1"/>
</dbReference>
<dbReference type="PRINTS" id="PR00067">
    <property type="entry name" value="CATALASE"/>
</dbReference>
<dbReference type="SMART" id="SM01060">
    <property type="entry name" value="Catalase"/>
    <property type="match status" value="1"/>
</dbReference>
<dbReference type="SUPFAM" id="SSF56634">
    <property type="entry name" value="Heme-dependent catalase-like"/>
    <property type="match status" value="1"/>
</dbReference>
<dbReference type="PROSITE" id="PS00437">
    <property type="entry name" value="CATALASE_1"/>
    <property type="match status" value="1"/>
</dbReference>
<dbReference type="PROSITE" id="PS00438">
    <property type="entry name" value="CATALASE_2"/>
    <property type="match status" value="1"/>
</dbReference>
<dbReference type="PROSITE" id="PS51402">
    <property type="entry name" value="CATALASE_3"/>
    <property type="match status" value="1"/>
</dbReference>
<protein>
    <recommendedName>
        <fullName>Catalase</fullName>
        <ecNumber>1.11.1.6</ecNumber>
    </recommendedName>
</protein>
<reference key="1">
    <citation type="journal article" date="2005" name="J. Bacteriol.">
        <title>Insights on evolution of virulence and resistance from the complete genome analysis of an early methicillin-resistant Staphylococcus aureus strain and a biofilm-producing methicillin-resistant Staphylococcus epidermidis strain.</title>
        <authorList>
            <person name="Gill S.R."/>
            <person name="Fouts D.E."/>
            <person name="Archer G.L."/>
            <person name="Mongodin E.F."/>
            <person name="DeBoy R.T."/>
            <person name="Ravel J."/>
            <person name="Paulsen I.T."/>
            <person name="Kolonay J.F."/>
            <person name="Brinkac L.M."/>
            <person name="Beanan M.J."/>
            <person name="Dodson R.J."/>
            <person name="Daugherty S.C."/>
            <person name="Madupu R."/>
            <person name="Angiuoli S.V."/>
            <person name="Durkin A.S."/>
            <person name="Haft D.H."/>
            <person name="Vamathevan J.J."/>
            <person name="Khouri H."/>
            <person name="Utterback T.R."/>
            <person name="Lee C."/>
            <person name="Dimitrov G."/>
            <person name="Jiang L."/>
            <person name="Qin H."/>
            <person name="Weidman J."/>
            <person name="Tran K."/>
            <person name="Kang K.H."/>
            <person name="Hance I.R."/>
            <person name="Nelson K.E."/>
            <person name="Fraser C.M."/>
        </authorList>
    </citation>
    <scope>NUCLEOTIDE SEQUENCE [LARGE SCALE GENOMIC DNA]</scope>
    <source>
        <strain>COL</strain>
    </source>
</reference>
<comment type="function">
    <text evidence="1">Decomposes hydrogen peroxide into water and oxygen; serves to protect cells from the toxic effects of hydrogen peroxide.</text>
</comment>
<comment type="catalytic activity">
    <reaction evidence="2">
        <text>2 H2O2 = O2 + 2 H2O</text>
        <dbReference type="Rhea" id="RHEA:20309"/>
        <dbReference type="ChEBI" id="CHEBI:15377"/>
        <dbReference type="ChEBI" id="CHEBI:15379"/>
        <dbReference type="ChEBI" id="CHEBI:16240"/>
        <dbReference type="EC" id="1.11.1.6"/>
    </reaction>
</comment>
<comment type="cofactor">
    <cofactor evidence="1">
        <name>heme</name>
        <dbReference type="ChEBI" id="CHEBI:30413"/>
    </cofactor>
</comment>
<comment type="subunit">
    <text evidence="1">Homodimer.</text>
</comment>
<comment type="similarity">
    <text evidence="4">Belongs to the catalase family.</text>
</comment>
<comment type="sequence caution" evidence="4">
    <conflict type="erroneous initiation">
        <sequence resource="EMBL-CDS" id="AAW36617"/>
    </conflict>
</comment>
<proteinExistence type="inferred from homology"/>
<feature type="chain" id="PRO_0000084997" description="Catalase">
    <location>
        <begin position="1"/>
        <end position="505"/>
    </location>
</feature>
<feature type="region of interest" description="Disordered" evidence="3">
    <location>
        <begin position="1"/>
        <end position="25"/>
    </location>
</feature>
<feature type="active site" evidence="2">
    <location>
        <position position="56"/>
    </location>
</feature>
<feature type="active site" evidence="2">
    <location>
        <position position="129"/>
    </location>
</feature>
<feature type="binding site" description="axial binding residue" evidence="1">
    <location>
        <position position="339"/>
    </location>
    <ligand>
        <name>heme</name>
        <dbReference type="ChEBI" id="CHEBI:30413"/>
    </ligand>
    <ligandPart>
        <name>Fe</name>
        <dbReference type="ChEBI" id="CHEBI:18248"/>
    </ligandPart>
</feature>
<accession>Q5HG86</accession>